<gene>
    <name evidence="1" type="primary">ctaB</name>
    <name type="ordered locus">PMM0448</name>
</gene>
<accession>Q7V2M7</accession>
<reference key="1">
    <citation type="journal article" date="2003" name="Nature">
        <title>Genome divergence in two Prochlorococcus ecotypes reflects oceanic niche differentiation.</title>
        <authorList>
            <person name="Rocap G."/>
            <person name="Larimer F.W."/>
            <person name="Lamerdin J.E."/>
            <person name="Malfatti S."/>
            <person name="Chain P."/>
            <person name="Ahlgren N.A."/>
            <person name="Arellano A."/>
            <person name="Coleman M."/>
            <person name="Hauser L."/>
            <person name="Hess W.R."/>
            <person name="Johnson Z.I."/>
            <person name="Land M.L."/>
            <person name="Lindell D."/>
            <person name="Post A.F."/>
            <person name="Regala W."/>
            <person name="Shah M."/>
            <person name="Shaw S.L."/>
            <person name="Steglich C."/>
            <person name="Sullivan M.B."/>
            <person name="Ting C.S."/>
            <person name="Tolonen A."/>
            <person name="Webb E.A."/>
            <person name="Zinser E.R."/>
            <person name="Chisholm S.W."/>
        </authorList>
    </citation>
    <scope>NUCLEOTIDE SEQUENCE [LARGE SCALE GENOMIC DNA]</scope>
    <source>
        <strain>CCMP1986 / NIES-2087 / MED4</strain>
    </source>
</reference>
<comment type="function">
    <text evidence="1">Converts heme B (protoheme IX) to heme O by substitution of the vinyl group on carbon 2 of heme B porphyrin ring with a hydroxyethyl farnesyl side group.</text>
</comment>
<comment type="catalytic activity">
    <reaction evidence="1">
        <text>heme b + (2E,6E)-farnesyl diphosphate + H2O = Fe(II)-heme o + diphosphate</text>
        <dbReference type="Rhea" id="RHEA:28070"/>
        <dbReference type="ChEBI" id="CHEBI:15377"/>
        <dbReference type="ChEBI" id="CHEBI:33019"/>
        <dbReference type="ChEBI" id="CHEBI:60344"/>
        <dbReference type="ChEBI" id="CHEBI:60530"/>
        <dbReference type="ChEBI" id="CHEBI:175763"/>
        <dbReference type="EC" id="2.5.1.141"/>
    </reaction>
</comment>
<comment type="pathway">
    <text evidence="1">Porphyrin-containing compound metabolism; heme O biosynthesis; heme O from protoheme: step 1/1.</text>
</comment>
<comment type="subcellular location">
    <subcellularLocation>
        <location evidence="1">Cell inner membrane</location>
        <topology evidence="1">Multi-pass membrane protein</topology>
    </subcellularLocation>
</comment>
<comment type="miscellaneous">
    <text evidence="1">Carbon 2 of the heme B porphyrin ring is defined according to the Fischer nomenclature.</text>
</comment>
<comment type="similarity">
    <text evidence="1">Belongs to the UbiA prenyltransferase family. Protoheme IX farnesyltransferase subfamily.</text>
</comment>
<dbReference type="EC" id="2.5.1.141" evidence="1"/>
<dbReference type="EMBL" id="BX548174">
    <property type="protein sequence ID" value="CAE18907.1"/>
    <property type="molecule type" value="Genomic_DNA"/>
</dbReference>
<dbReference type="RefSeq" id="WP_011132084.1">
    <property type="nucleotide sequence ID" value="NC_005072.1"/>
</dbReference>
<dbReference type="SMR" id="Q7V2M7"/>
<dbReference type="STRING" id="59919.PMM0448"/>
<dbReference type="KEGG" id="pmm:PMM0448"/>
<dbReference type="eggNOG" id="COG0109">
    <property type="taxonomic scope" value="Bacteria"/>
</dbReference>
<dbReference type="HOGENOM" id="CLU_029631_0_2_3"/>
<dbReference type="OrthoDB" id="9814417at2"/>
<dbReference type="UniPathway" id="UPA00834">
    <property type="reaction ID" value="UER00712"/>
</dbReference>
<dbReference type="Proteomes" id="UP000001026">
    <property type="component" value="Chromosome"/>
</dbReference>
<dbReference type="GO" id="GO:0005886">
    <property type="term" value="C:plasma membrane"/>
    <property type="evidence" value="ECO:0007669"/>
    <property type="project" value="UniProtKB-SubCell"/>
</dbReference>
<dbReference type="GO" id="GO:0008495">
    <property type="term" value="F:protoheme IX farnesyltransferase activity"/>
    <property type="evidence" value="ECO:0007669"/>
    <property type="project" value="UniProtKB-UniRule"/>
</dbReference>
<dbReference type="GO" id="GO:0048034">
    <property type="term" value="P:heme O biosynthetic process"/>
    <property type="evidence" value="ECO:0007669"/>
    <property type="project" value="UniProtKB-UniRule"/>
</dbReference>
<dbReference type="CDD" id="cd13957">
    <property type="entry name" value="PT_UbiA_Cox10"/>
    <property type="match status" value="1"/>
</dbReference>
<dbReference type="Gene3D" id="1.10.357.140">
    <property type="entry name" value="UbiA prenyltransferase"/>
    <property type="match status" value="1"/>
</dbReference>
<dbReference type="HAMAP" id="MF_00154">
    <property type="entry name" value="CyoE_CtaB"/>
    <property type="match status" value="1"/>
</dbReference>
<dbReference type="InterPro" id="IPR006369">
    <property type="entry name" value="Protohaem_IX_farnesylTrfase"/>
</dbReference>
<dbReference type="InterPro" id="IPR000537">
    <property type="entry name" value="UbiA_prenyltransferase"/>
</dbReference>
<dbReference type="InterPro" id="IPR030470">
    <property type="entry name" value="UbiA_prenylTrfase_CS"/>
</dbReference>
<dbReference type="InterPro" id="IPR044878">
    <property type="entry name" value="UbiA_sf"/>
</dbReference>
<dbReference type="NCBIfam" id="TIGR01473">
    <property type="entry name" value="cyoE_ctaB"/>
    <property type="match status" value="1"/>
</dbReference>
<dbReference type="NCBIfam" id="NF003349">
    <property type="entry name" value="PRK04375.1-2"/>
    <property type="match status" value="1"/>
</dbReference>
<dbReference type="PANTHER" id="PTHR43448:SF7">
    <property type="entry name" value="4-HYDROXYBENZOATE SOLANESYLTRANSFERASE"/>
    <property type="match status" value="1"/>
</dbReference>
<dbReference type="PANTHER" id="PTHR43448">
    <property type="entry name" value="PROTOHEME IX FARNESYLTRANSFERASE, MITOCHONDRIAL"/>
    <property type="match status" value="1"/>
</dbReference>
<dbReference type="Pfam" id="PF01040">
    <property type="entry name" value="UbiA"/>
    <property type="match status" value="1"/>
</dbReference>
<dbReference type="PROSITE" id="PS00943">
    <property type="entry name" value="UBIA"/>
    <property type="match status" value="1"/>
</dbReference>
<feature type="chain" id="PRO_0000327122" description="Protoheme IX farnesyltransferase">
    <location>
        <begin position="1"/>
        <end position="332"/>
    </location>
</feature>
<feature type="transmembrane region" description="Helical" evidence="1">
    <location>
        <begin position="63"/>
        <end position="83"/>
    </location>
</feature>
<feature type="transmembrane region" description="Helical" evidence="1">
    <location>
        <begin position="109"/>
        <end position="129"/>
    </location>
</feature>
<feature type="transmembrane region" description="Helical" evidence="1">
    <location>
        <begin position="132"/>
        <end position="152"/>
    </location>
</feature>
<feature type="transmembrane region" description="Helical" evidence="1">
    <location>
        <begin position="160"/>
        <end position="180"/>
    </location>
</feature>
<feature type="transmembrane region" description="Helical" evidence="1">
    <location>
        <begin position="188"/>
        <end position="208"/>
    </location>
</feature>
<feature type="transmembrane region" description="Helical" evidence="1">
    <location>
        <begin position="245"/>
        <end position="265"/>
    </location>
</feature>
<feature type="transmembrane region" description="Helical" evidence="1">
    <location>
        <begin position="286"/>
        <end position="306"/>
    </location>
</feature>
<keyword id="KW-0997">Cell inner membrane</keyword>
<keyword id="KW-1003">Cell membrane</keyword>
<keyword id="KW-0350">Heme biosynthesis</keyword>
<keyword id="KW-0472">Membrane</keyword>
<keyword id="KW-0808">Transferase</keyword>
<keyword id="KW-0812">Transmembrane</keyword>
<keyword id="KW-1133">Transmembrane helix</keyword>
<name>COXX_PROMP</name>
<organism>
    <name type="scientific">Prochlorococcus marinus subsp. pastoris (strain CCMP1986 / NIES-2087 / MED4)</name>
    <dbReference type="NCBI Taxonomy" id="59919"/>
    <lineage>
        <taxon>Bacteria</taxon>
        <taxon>Bacillati</taxon>
        <taxon>Cyanobacteriota</taxon>
        <taxon>Cyanophyceae</taxon>
        <taxon>Synechococcales</taxon>
        <taxon>Prochlorococcaceae</taxon>
        <taxon>Prochlorococcus</taxon>
    </lineage>
</organism>
<proteinExistence type="inferred from homology"/>
<evidence type="ECO:0000255" key="1">
    <source>
        <dbReference type="HAMAP-Rule" id="MF_00154"/>
    </source>
</evidence>
<sequence length="332" mass="36236">MKSNLENLNFQTSIREQVVPSRKKVKLPAWLEVAKPRLIPLLLATTLGGMALTEEWPLSSPKLICTLGGGALAAAAAGALNCLWEMDLDKRMKRTSDRALPSGKLSFNTVFLGAVSCTLAAAMLLISGVNYLAAGLTLLGLCSYVILYTIILKPRTTQNIVFGGVAGAIPPLVGASAATGHVGLSGWWLFSLVMLWTPAHFWALAILLKDDYASVGIPMLPSVKGSEFTVKAISRYGWATVFMSILGVFALPEGGILYLIMLLPFNGRLLQLINRLKSSPDDLEKAKGLFRWSILYMFGICLLLLISRTQLSVDFEHQSMQMFLSLKAYFNY</sequence>
<protein>
    <recommendedName>
        <fullName evidence="1">Protoheme IX farnesyltransferase</fullName>
        <ecNumber evidence="1">2.5.1.141</ecNumber>
    </recommendedName>
    <alternativeName>
        <fullName evidence="1">Heme B farnesyltransferase</fullName>
    </alternativeName>
    <alternativeName>
        <fullName evidence="1">Heme O synthase</fullName>
    </alternativeName>
</protein>